<feature type="chain" id="PRO_0000091143" description="Elongation factor G">
    <location>
        <begin position="1"/>
        <end position="700"/>
    </location>
</feature>
<feature type="domain" description="tr-type G">
    <location>
        <begin position="6"/>
        <end position="286"/>
    </location>
</feature>
<feature type="binding site" evidence="1">
    <location>
        <begin position="15"/>
        <end position="22"/>
    </location>
    <ligand>
        <name>GTP</name>
        <dbReference type="ChEBI" id="CHEBI:37565"/>
    </ligand>
</feature>
<feature type="binding site" evidence="1">
    <location>
        <begin position="79"/>
        <end position="83"/>
    </location>
    <ligand>
        <name>GTP</name>
        <dbReference type="ChEBI" id="CHEBI:37565"/>
    </ligand>
</feature>
<feature type="binding site" evidence="1">
    <location>
        <begin position="133"/>
        <end position="136"/>
    </location>
    <ligand>
        <name>GTP</name>
        <dbReference type="ChEBI" id="CHEBI:37565"/>
    </ligand>
</feature>
<evidence type="ECO:0000255" key="1">
    <source>
        <dbReference type="HAMAP-Rule" id="MF_00054"/>
    </source>
</evidence>
<organism>
    <name type="scientific">Leifsonia xyli subsp. xyli (strain CTCB07)</name>
    <dbReference type="NCBI Taxonomy" id="281090"/>
    <lineage>
        <taxon>Bacteria</taxon>
        <taxon>Bacillati</taxon>
        <taxon>Actinomycetota</taxon>
        <taxon>Actinomycetes</taxon>
        <taxon>Micrococcales</taxon>
        <taxon>Microbacteriaceae</taxon>
        <taxon>Leifsonia</taxon>
    </lineage>
</organism>
<comment type="function">
    <text evidence="1">Catalyzes the GTP-dependent ribosomal translocation step during translation elongation. During this step, the ribosome changes from the pre-translocational (PRE) to the post-translocational (POST) state as the newly formed A-site-bound peptidyl-tRNA and P-site-bound deacylated tRNA move to the P and E sites, respectively. Catalyzes the coordinated movement of the two tRNA molecules, the mRNA and conformational changes in the ribosome.</text>
</comment>
<comment type="subcellular location">
    <subcellularLocation>
        <location evidence="1">Cytoplasm</location>
    </subcellularLocation>
</comment>
<comment type="similarity">
    <text evidence="1">Belongs to the TRAFAC class translation factor GTPase superfamily. Classic translation factor GTPase family. EF-G/EF-2 subfamily.</text>
</comment>
<dbReference type="EMBL" id="AE016822">
    <property type="protein sequence ID" value="AAT89755.1"/>
    <property type="molecule type" value="Genomic_DNA"/>
</dbReference>
<dbReference type="SMR" id="Q6ACY9"/>
<dbReference type="STRING" id="281090.Lxx20400"/>
<dbReference type="KEGG" id="lxx:Lxx20400"/>
<dbReference type="eggNOG" id="COG0480">
    <property type="taxonomic scope" value="Bacteria"/>
</dbReference>
<dbReference type="HOGENOM" id="CLU_002794_4_1_11"/>
<dbReference type="Proteomes" id="UP000001306">
    <property type="component" value="Chromosome"/>
</dbReference>
<dbReference type="GO" id="GO:0005737">
    <property type="term" value="C:cytoplasm"/>
    <property type="evidence" value="ECO:0007669"/>
    <property type="project" value="UniProtKB-SubCell"/>
</dbReference>
<dbReference type="GO" id="GO:0005525">
    <property type="term" value="F:GTP binding"/>
    <property type="evidence" value="ECO:0007669"/>
    <property type="project" value="UniProtKB-UniRule"/>
</dbReference>
<dbReference type="GO" id="GO:0003924">
    <property type="term" value="F:GTPase activity"/>
    <property type="evidence" value="ECO:0007669"/>
    <property type="project" value="InterPro"/>
</dbReference>
<dbReference type="GO" id="GO:0003746">
    <property type="term" value="F:translation elongation factor activity"/>
    <property type="evidence" value="ECO:0007669"/>
    <property type="project" value="UniProtKB-UniRule"/>
</dbReference>
<dbReference type="GO" id="GO:0032790">
    <property type="term" value="P:ribosome disassembly"/>
    <property type="evidence" value="ECO:0007669"/>
    <property type="project" value="TreeGrafter"/>
</dbReference>
<dbReference type="CDD" id="cd01886">
    <property type="entry name" value="EF-G"/>
    <property type="match status" value="1"/>
</dbReference>
<dbReference type="CDD" id="cd16262">
    <property type="entry name" value="EFG_III"/>
    <property type="match status" value="1"/>
</dbReference>
<dbReference type="CDD" id="cd01434">
    <property type="entry name" value="EFG_mtEFG1_IV"/>
    <property type="match status" value="1"/>
</dbReference>
<dbReference type="CDD" id="cd03713">
    <property type="entry name" value="EFG_mtEFG_C"/>
    <property type="match status" value="1"/>
</dbReference>
<dbReference type="CDD" id="cd04088">
    <property type="entry name" value="EFG_mtEFG_II"/>
    <property type="match status" value="1"/>
</dbReference>
<dbReference type="FunFam" id="2.40.30.10:FF:000006">
    <property type="entry name" value="Elongation factor G"/>
    <property type="match status" value="1"/>
</dbReference>
<dbReference type="FunFam" id="3.30.230.10:FF:000003">
    <property type="entry name" value="Elongation factor G"/>
    <property type="match status" value="1"/>
</dbReference>
<dbReference type="FunFam" id="3.30.70.240:FF:000001">
    <property type="entry name" value="Elongation factor G"/>
    <property type="match status" value="1"/>
</dbReference>
<dbReference type="FunFam" id="3.30.70.870:FF:000001">
    <property type="entry name" value="Elongation factor G"/>
    <property type="match status" value="1"/>
</dbReference>
<dbReference type="FunFam" id="3.40.50.300:FF:000029">
    <property type="entry name" value="Elongation factor G"/>
    <property type="match status" value="1"/>
</dbReference>
<dbReference type="Gene3D" id="3.30.230.10">
    <property type="match status" value="1"/>
</dbReference>
<dbReference type="Gene3D" id="3.30.70.240">
    <property type="match status" value="1"/>
</dbReference>
<dbReference type="Gene3D" id="3.30.70.870">
    <property type="entry name" value="Elongation Factor G (Translational Gtpase), domain 3"/>
    <property type="match status" value="1"/>
</dbReference>
<dbReference type="Gene3D" id="3.40.50.300">
    <property type="entry name" value="P-loop containing nucleotide triphosphate hydrolases"/>
    <property type="match status" value="1"/>
</dbReference>
<dbReference type="Gene3D" id="2.40.30.10">
    <property type="entry name" value="Translation factors"/>
    <property type="match status" value="1"/>
</dbReference>
<dbReference type="HAMAP" id="MF_00054_B">
    <property type="entry name" value="EF_G_EF_2_B"/>
    <property type="match status" value="1"/>
</dbReference>
<dbReference type="InterPro" id="IPR041095">
    <property type="entry name" value="EFG_II"/>
</dbReference>
<dbReference type="InterPro" id="IPR009022">
    <property type="entry name" value="EFG_III"/>
</dbReference>
<dbReference type="InterPro" id="IPR035647">
    <property type="entry name" value="EFG_III/V"/>
</dbReference>
<dbReference type="InterPro" id="IPR047872">
    <property type="entry name" value="EFG_IV"/>
</dbReference>
<dbReference type="InterPro" id="IPR035649">
    <property type="entry name" value="EFG_V"/>
</dbReference>
<dbReference type="InterPro" id="IPR000640">
    <property type="entry name" value="EFG_V-like"/>
</dbReference>
<dbReference type="InterPro" id="IPR004161">
    <property type="entry name" value="EFTu-like_2"/>
</dbReference>
<dbReference type="InterPro" id="IPR031157">
    <property type="entry name" value="G_TR_CS"/>
</dbReference>
<dbReference type="InterPro" id="IPR027417">
    <property type="entry name" value="P-loop_NTPase"/>
</dbReference>
<dbReference type="InterPro" id="IPR020568">
    <property type="entry name" value="Ribosomal_Su5_D2-typ_SF"/>
</dbReference>
<dbReference type="InterPro" id="IPR014721">
    <property type="entry name" value="Ribsml_uS5_D2-typ_fold_subgr"/>
</dbReference>
<dbReference type="InterPro" id="IPR005225">
    <property type="entry name" value="Small_GTP-bd"/>
</dbReference>
<dbReference type="InterPro" id="IPR000795">
    <property type="entry name" value="T_Tr_GTP-bd_dom"/>
</dbReference>
<dbReference type="InterPro" id="IPR009000">
    <property type="entry name" value="Transl_B-barrel_sf"/>
</dbReference>
<dbReference type="InterPro" id="IPR004540">
    <property type="entry name" value="Transl_elong_EFG/EF2"/>
</dbReference>
<dbReference type="InterPro" id="IPR005517">
    <property type="entry name" value="Transl_elong_EFG/EF2_IV"/>
</dbReference>
<dbReference type="NCBIfam" id="TIGR00484">
    <property type="entry name" value="EF-G"/>
    <property type="match status" value="1"/>
</dbReference>
<dbReference type="NCBIfam" id="NF009381">
    <property type="entry name" value="PRK12740.1-5"/>
    <property type="match status" value="1"/>
</dbReference>
<dbReference type="NCBIfam" id="TIGR00231">
    <property type="entry name" value="small_GTP"/>
    <property type="match status" value="1"/>
</dbReference>
<dbReference type="PANTHER" id="PTHR43261:SF1">
    <property type="entry name" value="RIBOSOME-RELEASING FACTOR 2, MITOCHONDRIAL"/>
    <property type="match status" value="1"/>
</dbReference>
<dbReference type="PANTHER" id="PTHR43261">
    <property type="entry name" value="TRANSLATION ELONGATION FACTOR G-RELATED"/>
    <property type="match status" value="1"/>
</dbReference>
<dbReference type="Pfam" id="PF00679">
    <property type="entry name" value="EFG_C"/>
    <property type="match status" value="1"/>
</dbReference>
<dbReference type="Pfam" id="PF14492">
    <property type="entry name" value="EFG_III"/>
    <property type="match status" value="1"/>
</dbReference>
<dbReference type="Pfam" id="PF03764">
    <property type="entry name" value="EFG_IV"/>
    <property type="match status" value="1"/>
</dbReference>
<dbReference type="Pfam" id="PF00009">
    <property type="entry name" value="GTP_EFTU"/>
    <property type="match status" value="1"/>
</dbReference>
<dbReference type="Pfam" id="PF03144">
    <property type="entry name" value="GTP_EFTU_D2"/>
    <property type="match status" value="1"/>
</dbReference>
<dbReference type="PRINTS" id="PR00315">
    <property type="entry name" value="ELONGATNFCT"/>
</dbReference>
<dbReference type="SMART" id="SM00838">
    <property type="entry name" value="EFG_C"/>
    <property type="match status" value="1"/>
</dbReference>
<dbReference type="SMART" id="SM00889">
    <property type="entry name" value="EFG_IV"/>
    <property type="match status" value="1"/>
</dbReference>
<dbReference type="SUPFAM" id="SSF54980">
    <property type="entry name" value="EF-G C-terminal domain-like"/>
    <property type="match status" value="2"/>
</dbReference>
<dbReference type="SUPFAM" id="SSF52540">
    <property type="entry name" value="P-loop containing nucleoside triphosphate hydrolases"/>
    <property type="match status" value="1"/>
</dbReference>
<dbReference type="SUPFAM" id="SSF54211">
    <property type="entry name" value="Ribosomal protein S5 domain 2-like"/>
    <property type="match status" value="1"/>
</dbReference>
<dbReference type="SUPFAM" id="SSF50447">
    <property type="entry name" value="Translation proteins"/>
    <property type="match status" value="1"/>
</dbReference>
<dbReference type="PROSITE" id="PS00301">
    <property type="entry name" value="G_TR_1"/>
    <property type="match status" value="1"/>
</dbReference>
<dbReference type="PROSITE" id="PS51722">
    <property type="entry name" value="G_TR_2"/>
    <property type="match status" value="1"/>
</dbReference>
<name>EFG_LEIXX</name>
<keyword id="KW-0963">Cytoplasm</keyword>
<keyword id="KW-0251">Elongation factor</keyword>
<keyword id="KW-0342">GTP-binding</keyword>
<keyword id="KW-0547">Nucleotide-binding</keyword>
<keyword id="KW-0648">Protein biosynthesis</keyword>
<keyword id="KW-1185">Reference proteome</keyword>
<protein>
    <recommendedName>
        <fullName evidence="1">Elongation factor G</fullName>
        <shortName evidence="1">EF-G</shortName>
    </recommendedName>
</protein>
<sequence length="700" mass="77064">MLTDLHKVRNIGIMAHIDAGKTTTTERILFYTGVNHKLGETHDGASTTDWMEQEKERGITITSAAVTCFWNKNQINIIDTPGHVDFTVEVERSLRVLDGAVAVFDAKEGVEPQSETVWRQADKYVVPRICFVNKMDKLGADFYFTVDTIISRLGAKPLVMQLPIGSESEFIGVVDLIEMRALVWPGDAKGDVTMGAKYEVQEIPADLQAKAEEYRAKLVETVAESDDALLEKFFGGEELTVAEIKGAIRTMTVNNEIYPVLCGSAFKNRGVQPMLDAVIDYLPSPLDVPAIEAHDPRDEEKVILRHADATEPFSALAFKVAVHPFFGRLTYVRIYSGRVDSGAQVINSTKGRKERIGKIFQMHANKENPVDFVTAGNIYAVIGLKDTTTGDTLSDPANEVVLESMTFPEPVIEVAIEPKTKADQEKLGTAIQKLAEEDPTFRTEQNQETGQTVIKGMGELHLDILVDRMKREFNVEANVGKPQVAYRETLRRTVEKHDYTHKKQTGGSGQFAKVQITLEPLEVTPETSYEFVNAVTGGRVPREYIPSVDAGIQDAMQVGVLAGFPTVGVKATLVDGASHDVDSSEMAFKIAGSMAYKEAARKANPVLLEPLMAVEVRTPEEYMGDVIGDLNSRRGQIQSMEDASGVKVVKVNVPLSEMFGYIGDLRSKTSGRAVYSMQFDSYAEVPKAVADEIVQKSKGE</sequence>
<proteinExistence type="inferred from homology"/>
<reference key="1">
    <citation type="journal article" date="2004" name="Mol. Plant Microbe Interact.">
        <title>The genome sequence of the Gram-positive sugarcane pathogen Leifsonia xyli subsp. xyli.</title>
        <authorList>
            <person name="Monteiro-Vitorello C.B."/>
            <person name="Camargo L.E.A."/>
            <person name="Van Sluys M.A."/>
            <person name="Kitajima J.P."/>
            <person name="Truffi D."/>
            <person name="do Amaral A.M."/>
            <person name="Harakava R."/>
            <person name="de Oliveira J.C.F."/>
            <person name="Wood D."/>
            <person name="de Oliveira M.C."/>
            <person name="Miyaki C.Y."/>
            <person name="Takita M.A."/>
            <person name="da Silva A.C.R."/>
            <person name="Furlan L.R."/>
            <person name="Carraro D.M."/>
            <person name="Camarotte G."/>
            <person name="Almeida N.F. Jr."/>
            <person name="Carrer H."/>
            <person name="Coutinho L.L."/>
            <person name="El-Dorry H.A."/>
            <person name="Ferro M.I.T."/>
            <person name="Gagliardi P.R."/>
            <person name="Giglioti E."/>
            <person name="Goldman M.H.S."/>
            <person name="Goldman G.H."/>
            <person name="Kimura E.T."/>
            <person name="Ferro E.S."/>
            <person name="Kuramae E.E."/>
            <person name="Lemos E.G.M."/>
            <person name="Lemos M.V.F."/>
            <person name="Mauro S.M.Z."/>
            <person name="Machado M.A."/>
            <person name="Marino C.L."/>
            <person name="Menck C.F."/>
            <person name="Nunes L.R."/>
            <person name="Oliveira R.C."/>
            <person name="Pereira G.G."/>
            <person name="Siqueira W."/>
            <person name="de Souza A.A."/>
            <person name="Tsai S.M."/>
            <person name="Zanca A.S."/>
            <person name="Simpson A.J.G."/>
            <person name="Brumbley S.M."/>
            <person name="Setubal J.C."/>
        </authorList>
    </citation>
    <scope>NUCLEOTIDE SEQUENCE [LARGE SCALE GENOMIC DNA]</scope>
    <source>
        <strain>CTCB07</strain>
    </source>
</reference>
<gene>
    <name evidence="1" type="primary">fusA</name>
    <name type="ordered locus">Lxx20400</name>
</gene>
<accession>Q6ACY9</accession>